<organism>
    <name type="scientific">Brevibacillus brevis (strain 47 / JCM 6285 / NBRC 100599)</name>
    <dbReference type="NCBI Taxonomy" id="358681"/>
    <lineage>
        <taxon>Bacteria</taxon>
        <taxon>Bacillati</taxon>
        <taxon>Bacillota</taxon>
        <taxon>Bacilli</taxon>
        <taxon>Bacillales</taxon>
        <taxon>Paenibacillaceae</taxon>
        <taxon>Brevibacillus</taxon>
    </lineage>
</organism>
<accession>C0ZCC7</accession>
<keyword id="KW-0342">GTP-binding</keyword>
<keyword id="KW-0378">Hydrolase</keyword>
<keyword id="KW-0479">Metal-binding</keyword>
<keyword id="KW-0547">Nucleotide-binding</keyword>
<keyword id="KW-0554">One-carbon metabolism</keyword>
<keyword id="KW-1185">Reference proteome</keyword>
<keyword id="KW-0862">Zinc</keyword>
<proteinExistence type="inferred from homology"/>
<comment type="catalytic activity">
    <reaction evidence="1">
        <text>GTP + H2O = 7,8-dihydroneopterin 3'-triphosphate + formate + H(+)</text>
        <dbReference type="Rhea" id="RHEA:17473"/>
        <dbReference type="ChEBI" id="CHEBI:15377"/>
        <dbReference type="ChEBI" id="CHEBI:15378"/>
        <dbReference type="ChEBI" id="CHEBI:15740"/>
        <dbReference type="ChEBI" id="CHEBI:37565"/>
        <dbReference type="ChEBI" id="CHEBI:58462"/>
        <dbReference type="EC" id="3.5.4.16"/>
    </reaction>
</comment>
<comment type="pathway">
    <text evidence="1">Cofactor biosynthesis; 7,8-dihydroneopterin triphosphate biosynthesis; 7,8-dihydroneopterin triphosphate from GTP: step 1/1.</text>
</comment>
<comment type="subunit">
    <text evidence="1">Homomer.</text>
</comment>
<comment type="similarity">
    <text evidence="1">Belongs to the GTP cyclohydrolase I family.</text>
</comment>
<sequence>MMNVDLDKIQQAVRMILEAVGDDPDREGVLDTPKRVAKMYAEVFEGMHIDEEQYFETVFSEDHEEMVLVKDIPFYSMCEHHLVPFFGKAHVAYVPRGGRVVGLSKLARAVDTVAKRPQLQERITATVADSIMRKLDPHGVVVVVEAEHMCMTMRGVKKPGSKTITSAVRGMFEKDAAARAEVISLMR</sequence>
<feature type="chain" id="PRO_1000124910" description="GTP cyclohydrolase 1">
    <location>
        <begin position="1"/>
        <end position="187"/>
    </location>
</feature>
<feature type="binding site" evidence="1">
    <location>
        <position position="78"/>
    </location>
    <ligand>
        <name>Zn(2+)</name>
        <dbReference type="ChEBI" id="CHEBI:29105"/>
    </ligand>
</feature>
<feature type="binding site" evidence="1">
    <location>
        <position position="81"/>
    </location>
    <ligand>
        <name>Zn(2+)</name>
        <dbReference type="ChEBI" id="CHEBI:29105"/>
    </ligand>
</feature>
<feature type="binding site" evidence="1">
    <location>
        <position position="150"/>
    </location>
    <ligand>
        <name>Zn(2+)</name>
        <dbReference type="ChEBI" id="CHEBI:29105"/>
    </ligand>
</feature>
<dbReference type="EC" id="3.5.4.16" evidence="1"/>
<dbReference type="EMBL" id="AP008955">
    <property type="protein sequence ID" value="BAH43436.1"/>
    <property type="molecule type" value="Genomic_DNA"/>
</dbReference>
<dbReference type="SMR" id="C0ZCC7"/>
<dbReference type="STRING" id="358681.BBR47_24590"/>
<dbReference type="KEGG" id="bbe:BBR47_24590"/>
<dbReference type="eggNOG" id="COG0302">
    <property type="taxonomic scope" value="Bacteria"/>
</dbReference>
<dbReference type="HOGENOM" id="CLU_049768_3_3_9"/>
<dbReference type="UniPathway" id="UPA00848">
    <property type="reaction ID" value="UER00151"/>
</dbReference>
<dbReference type="Proteomes" id="UP000001877">
    <property type="component" value="Chromosome"/>
</dbReference>
<dbReference type="GO" id="GO:0005737">
    <property type="term" value="C:cytoplasm"/>
    <property type="evidence" value="ECO:0007669"/>
    <property type="project" value="TreeGrafter"/>
</dbReference>
<dbReference type="GO" id="GO:0005525">
    <property type="term" value="F:GTP binding"/>
    <property type="evidence" value="ECO:0007669"/>
    <property type="project" value="UniProtKB-KW"/>
</dbReference>
<dbReference type="GO" id="GO:0003934">
    <property type="term" value="F:GTP cyclohydrolase I activity"/>
    <property type="evidence" value="ECO:0007669"/>
    <property type="project" value="UniProtKB-UniRule"/>
</dbReference>
<dbReference type="GO" id="GO:0008270">
    <property type="term" value="F:zinc ion binding"/>
    <property type="evidence" value="ECO:0007669"/>
    <property type="project" value="UniProtKB-UniRule"/>
</dbReference>
<dbReference type="GO" id="GO:0006730">
    <property type="term" value="P:one-carbon metabolic process"/>
    <property type="evidence" value="ECO:0007669"/>
    <property type="project" value="UniProtKB-UniRule"/>
</dbReference>
<dbReference type="GO" id="GO:0006729">
    <property type="term" value="P:tetrahydrobiopterin biosynthetic process"/>
    <property type="evidence" value="ECO:0007669"/>
    <property type="project" value="TreeGrafter"/>
</dbReference>
<dbReference type="GO" id="GO:0046654">
    <property type="term" value="P:tetrahydrofolate biosynthetic process"/>
    <property type="evidence" value="ECO:0007669"/>
    <property type="project" value="UniProtKB-UniRule"/>
</dbReference>
<dbReference type="FunFam" id="1.10.286.10:FF:000001">
    <property type="entry name" value="GTP cyclohydrolase 1"/>
    <property type="match status" value="1"/>
</dbReference>
<dbReference type="FunFam" id="3.30.1130.10:FF:000001">
    <property type="entry name" value="GTP cyclohydrolase 1"/>
    <property type="match status" value="1"/>
</dbReference>
<dbReference type="Gene3D" id="1.10.286.10">
    <property type="match status" value="1"/>
</dbReference>
<dbReference type="Gene3D" id="3.30.1130.10">
    <property type="match status" value="1"/>
</dbReference>
<dbReference type="HAMAP" id="MF_00223">
    <property type="entry name" value="FolE"/>
    <property type="match status" value="1"/>
</dbReference>
<dbReference type="InterPro" id="IPR043133">
    <property type="entry name" value="GTP-CH-I_C/QueF"/>
</dbReference>
<dbReference type="InterPro" id="IPR043134">
    <property type="entry name" value="GTP-CH-I_N"/>
</dbReference>
<dbReference type="InterPro" id="IPR001474">
    <property type="entry name" value="GTP_CycHdrlase_I"/>
</dbReference>
<dbReference type="InterPro" id="IPR018234">
    <property type="entry name" value="GTP_CycHdrlase_I_CS"/>
</dbReference>
<dbReference type="InterPro" id="IPR020602">
    <property type="entry name" value="GTP_CycHdrlase_I_dom"/>
</dbReference>
<dbReference type="NCBIfam" id="TIGR00063">
    <property type="entry name" value="folE"/>
    <property type="match status" value="1"/>
</dbReference>
<dbReference type="NCBIfam" id="NF006825">
    <property type="entry name" value="PRK09347.1-2"/>
    <property type="match status" value="1"/>
</dbReference>
<dbReference type="NCBIfam" id="NF006826">
    <property type="entry name" value="PRK09347.1-3"/>
    <property type="match status" value="1"/>
</dbReference>
<dbReference type="PANTHER" id="PTHR11109:SF7">
    <property type="entry name" value="GTP CYCLOHYDROLASE 1"/>
    <property type="match status" value="1"/>
</dbReference>
<dbReference type="PANTHER" id="PTHR11109">
    <property type="entry name" value="GTP CYCLOHYDROLASE I"/>
    <property type="match status" value="1"/>
</dbReference>
<dbReference type="Pfam" id="PF01227">
    <property type="entry name" value="GTP_cyclohydroI"/>
    <property type="match status" value="1"/>
</dbReference>
<dbReference type="SUPFAM" id="SSF55620">
    <property type="entry name" value="Tetrahydrobiopterin biosynthesis enzymes-like"/>
    <property type="match status" value="1"/>
</dbReference>
<dbReference type="PROSITE" id="PS00859">
    <property type="entry name" value="GTP_CYCLOHYDROL_1_1"/>
    <property type="match status" value="1"/>
</dbReference>
<dbReference type="PROSITE" id="PS00860">
    <property type="entry name" value="GTP_CYCLOHYDROL_1_2"/>
    <property type="match status" value="1"/>
</dbReference>
<protein>
    <recommendedName>
        <fullName evidence="1">GTP cyclohydrolase 1</fullName>
        <ecNumber evidence="1">3.5.4.16</ecNumber>
    </recommendedName>
    <alternativeName>
        <fullName evidence="1">GTP cyclohydrolase I</fullName>
        <shortName evidence="1">GTP-CH-I</shortName>
    </alternativeName>
</protein>
<gene>
    <name evidence="1" type="primary">folE</name>
    <name type="ordered locus">BBR47_24590</name>
</gene>
<evidence type="ECO:0000255" key="1">
    <source>
        <dbReference type="HAMAP-Rule" id="MF_00223"/>
    </source>
</evidence>
<reference key="1">
    <citation type="submission" date="2005-03" db="EMBL/GenBank/DDBJ databases">
        <title>Brevibacillus brevis strain 47, complete genome.</title>
        <authorList>
            <person name="Hosoyama A."/>
            <person name="Yamada R."/>
            <person name="Hongo Y."/>
            <person name="Terui Y."/>
            <person name="Ankai A."/>
            <person name="Masuyama W."/>
            <person name="Sekiguchi M."/>
            <person name="Takeda T."/>
            <person name="Asano K."/>
            <person name="Ohji S."/>
            <person name="Ichikawa N."/>
            <person name="Narita S."/>
            <person name="Aoki N."/>
            <person name="Miura H."/>
            <person name="Matsushita S."/>
            <person name="Sekigawa T."/>
            <person name="Yamagata H."/>
            <person name="Yoshikawa H."/>
            <person name="Udaka S."/>
            <person name="Tanikawa S."/>
            <person name="Fujita N."/>
        </authorList>
    </citation>
    <scope>NUCLEOTIDE SEQUENCE [LARGE SCALE GENOMIC DNA]</scope>
    <source>
        <strain>47 / JCM 6285 / NBRC 100599</strain>
    </source>
</reference>
<name>GCH1_BREBN</name>